<comment type="function">
    <text evidence="1">Specifically dimethylates two adjacent adenosines (A1518 and A1519) in the loop of a conserved hairpin near the 3'-end of 16S rRNA in the 30S particle. May play a critical role in biogenesis of 30S subunits.</text>
</comment>
<comment type="catalytic activity">
    <reaction evidence="1">
        <text>adenosine(1518)/adenosine(1519) in 16S rRNA + 4 S-adenosyl-L-methionine = N(6)-dimethyladenosine(1518)/N(6)-dimethyladenosine(1519) in 16S rRNA + 4 S-adenosyl-L-homocysteine + 4 H(+)</text>
        <dbReference type="Rhea" id="RHEA:19609"/>
        <dbReference type="Rhea" id="RHEA-COMP:10232"/>
        <dbReference type="Rhea" id="RHEA-COMP:10233"/>
        <dbReference type="ChEBI" id="CHEBI:15378"/>
        <dbReference type="ChEBI" id="CHEBI:57856"/>
        <dbReference type="ChEBI" id="CHEBI:59789"/>
        <dbReference type="ChEBI" id="CHEBI:74411"/>
        <dbReference type="ChEBI" id="CHEBI:74493"/>
        <dbReference type="EC" id="2.1.1.182"/>
    </reaction>
</comment>
<comment type="subcellular location">
    <subcellularLocation>
        <location evidence="1">Cytoplasm</location>
    </subcellularLocation>
</comment>
<comment type="similarity">
    <text evidence="1">Belongs to the class I-like SAM-binding methyltransferase superfamily. rRNA adenine N(6)-methyltransferase family. RsmA subfamily.</text>
</comment>
<name>RSMA_AGRFC</name>
<proteinExistence type="inferred from homology"/>
<evidence type="ECO:0000255" key="1">
    <source>
        <dbReference type="HAMAP-Rule" id="MF_00607"/>
    </source>
</evidence>
<organism>
    <name type="scientific">Agrobacterium fabrum (strain C58 / ATCC 33970)</name>
    <name type="common">Agrobacterium tumefaciens (strain C58)</name>
    <dbReference type="NCBI Taxonomy" id="176299"/>
    <lineage>
        <taxon>Bacteria</taxon>
        <taxon>Pseudomonadati</taxon>
        <taxon>Pseudomonadota</taxon>
        <taxon>Alphaproteobacteria</taxon>
        <taxon>Hyphomicrobiales</taxon>
        <taxon>Rhizobiaceae</taxon>
        <taxon>Rhizobium/Agrobacterium group</taxon>
        <taxon>Agrobacterium</taxon>
        <taxon>Agrobacterium tumefaciens complex</taxon>
    </lineage>
</organism>
<sequence length="276" mass="30179">MAAIDGLPPLRDVIQRHGLDAKKSLGQNFLFDLNLTQKIARTAGPLDGVTVIEVGPGPGGLTRAILSLGAKKVIAVERDSRCLPVLAEIEAHYPGRLEVIEGDALKTDFEALVPAGEPVRIIANLPYNVGTQLLVNWLLPREWPPFWLSMTLMFQKEVGQRIVAEEGDNHYGRLGVLAGWRTVSEMAFDVPPQAFSPPPKVTSTVVHLLPKDKPLPCDVAKLERVTEAAFGQRRKMLRQSVKSLGGETLLEKAGIDPTRRAETLSVEEFVTLANCL</sequence>
<protein>
    <recommendedName>
        <fullName evidence="1">Ribosomal RNA small subunit methyltransferase A</fullName>
        <ecNumber evidence="1">2.1.1.182</ecNumber>
    </recommendedName>
    <alternativeName>
        <fullName evidence="1">16S rRNA (adenine(1518)-N(6)/adenine(1519)-N(6))-dimethyltransferase</fullName>
    </alternativeName>
    <alternativeName>
        <fullName evidence="1">16S rRNA dimethyladenosine transferase</fullName>
    </alternativeName>
    <alternativeName>
        <fullName evidence="1">16S rRNA dimethylase</fullName>
    </alternativeName>
    <alternativeName>
        <fullName evidence="1">S-adenosylmethionine-6-N', N'-adenosyl(rRNA) dimethyltransferase</fullName>
    </alternativeName>
</protein>
<keyword id="KW-0963">Cytoplasm</keyword>
<keyword id="KW-0489">Methyltransferase</keyword>
<keyword id="KW-1185">Reference proteome</keyword>
<keyword id="KW-0694">RNA-binding</keyword>
<keyword id="KW-0698">rRNA processing</keyword>
<keyword id="KW-0949">S-adenosyl-L-methionine</keyword>
<keyword id="KW-0808">Transferase</keyword>
<feature type="chain" id="PRO_0000101471" description="Ribosomal RNA small subunit methyltransferase A">
    <location>
        <begin position="1"/>
        <end position="276"/>
    </location>
</feature>
<feature type="binding site" evidence="1">
    <location>
        <position position="28"/>
    </location>
    <ligand>
        <name>S-adenosyl-L-methionine</name>
        <dbReference type="ChEBI" id="CHEBI:59789"/>
    </ligand>
</feature>
<feature type="binding site" evidence="1">
    <location>
        <position position="30"/>
    </location>
    <ligand>
        <name>S-adenosyl-L-methionine</name>
        <dbReference type="ChEBI" id="CHEBI:59789"/>
    </ligand>
</feature>
<feature type="binding site" evidence="1">
    <location>
        <position position="55"/>
    </location>
    <ligand>
        <name>S-adenosyl-L-methionine</name>
        <dbReference type="ChEBI" id="CHEBI:59789"/>
    </ligand>
</feature>
<feature type="binding site" evidence="1">
    <location>
        <position position="77"/>
    </location>
    <ligand>
        <name>S-adenosyl-L-methionine</name>
        <dbReference type="ChEBI" id="CHEBI:59789"/>
    </ligand>
</feature>
<feature type="binding site" evidence="1">
    <location>
        <position position="103"/>
    </location>
    <ligand>
        <name>S-adenosyl-L-methionine</name>
        <dbReference type="ChEBI" id="CHEBI:59789"/>
    </ligand>
</feature>
<feature type="binding site" evidence="1">
    <location>
        <position position="124"/>
    </location>
    <ligand>
        <name>S-adenosyl-L-methionine</name>
        <dbReference type="ChEBI" id="CHEBI:59789"/>
    </ligand>
</feature>
<gene>
    <name evidence="1" type="primary">rsmA</name>
    <name evidence="1" type="synonym">ksgA</name>
    <name type="ordered locus">Atu1103</name>
    <name type="ORF">AGR_C_2042</name>
</gene>
<dbReference type="EC" id="2.1.1.182" evidence="1"/>
<dbReference type="EMBL" id="AE007869">
    <property type="protein sequence ID" value="AAK86909.1"/>
    <property type="molecule type" value="Genomic_DNA"/>
</dbReference>
<dbReference type="PIR" id="AF2712">
    <property type="entry name" value="AF2712"/>
</dbReference>
<dbReference type="PIR" id="D97494">
    <property type="entry name" value="D97494"/>
</dbReference>
<dbReference type="RefSeq" id="NP_354124.1">
    <property type="nucleotide sequence ID" value="NC_003062.2"/>
</dbReference>
<dbReference type="RefSeq" id="WP_006314585.1">
    <property type="nucleotide sequence ID" value="NC_003062.2"/>
</dbReference>
<dbReference type="SMR" id="Q8UGD5"/>
<dbReference type="STRING" id="176299.Atu1103"/>
<dbReference type="EnsemblBacteria" id="AAK86909">
    <property type="protein sequence ID" value="AAK86909"/>
    <property type="gene ID" value="Atu1103"/>
</dbReference>
<dbReference type="GeneID" id="1133141"/>
<dbReference type="KEGG" id="atu:Atu1103"/>
<dbReference type="PATRIC" id="fig|176299.10.peg.1119"/>
<dbReference type="eggNOG" id="COG0030">
    <property type="taxonomic scope" value="Bacteria"/>
</dbReference>
<dbReference type="HOGENOM" id="CLU_041220_0_1_5"/>
<dbReference type="OrthoDB" id="9814755at2"/>
<dbReference type="PhylomeDB" id="Q8UGD5"/>
<dbReference type="BioCyc" id="AGRO:ATU1103-MONOMER"/>
<dbReference type="Proteomes" id="UP000000813">
    <property type="component" value="Chromosome circular"/>
</dbReference>
<dbReference type="GO" id="GO:0005829">
    <property type="term" value="C:cytosol"/>
    <property type="evidence" value="ECO:0007669"/>
    <property type="project" value="TreeGrafter"/>
</dbReference>
<dbReference type="GO" id="GO:0052908">
    <property type="term" value="F:16S rRNA (adenine(1518)-N(6)/adenine(1519)-N(6))-dimethyltransferase activity"/>
    <property type="evidence" value="ECO:0007669"/>
    <property type="project" value="UniProtKB-EC"/>
</dbReference>
<dbReference type="GO" id="GO:0003723">
    <property type="term" value="F:RNA binding"/>
    <property type="evidence" value="ECO:0007669"/>
    <property type="project" value="UniProtKB-KW"/>
</dbReference>
<dbReference type="CDD" id="cd02440">
    <property type="entry name" value="AdoMet_MTases"/>
    <property type="match status" value="1"/>
</dbReference>
<dbReference type="FunFam" id="1.10.8.100:FF:000001">
    <property type="entry name" value="Ribosomal RNA small subunit methyltransferase A"/>
    <property type="match status" value="1"/>
</dbReference>
<dbReference type="Gene3D" id="1.10.8.100">
    <property type="entry name" value="Ribosomal RNA adenine dimethylase-like, domain 2"/>
    <property type="match status" value="1"/>
</dbReference>
<dbReference type="Gene3D" id="3.40.50.150">
    <property type="entry name" value="Vaccinia Virus protein VP39"/>
    <property type="match status" value="1"/>
</dbReference>
<dbReference type="HAMAP" id="MF_00607">
    <property type="entry name" value="16SrRNA_methyltr_A"/>
    <property type="match status" value="1"/>
</dbReference>
<dbReference type="InterPro" id="IPR001737">
    <property type="entry name" value="KsgA/Erm"/>
</dbReference>
<dbReference type="InterPro" id="IPR023165">
    <property type="entry name" value="rRNA_Ade_diMease-like_C"/>
</dbReference>
<dbReference type="InterPro" id="IPR020596">
    <property type="entry name" value="rRNA_Ade_Mease_Trfase_CS"/>
</dbReference>
<dbReference type="InterPro" id="IPR020598">
    <property type="entry name" value="rRNA_Ade_methylase_Trfase_N"/>
</dbReference>
<dbReference type="InterPro" id="IPR011530">
    <property type="entry name" value="rRNA_adenine_dimethylase"/>
</dbReference>
<dbReference type="InterPro" id="IPR029063">
    <property type="entry name" value="SAM-dependent_MTases_sf"/>
</dbReference>
<dbReference type="NCBIfam" id="TIGR00755">
    <property type="entry name" value="ksgA"/>
    <property type="match status" value="1"/>
</dbReference>
<dbReference type="PANTHER" id="PTHR11727">
    <property type="entry name" value="DIMETHYLADENOSINE TRANSFERASE"/>
    <property type="match status" value="1"/>
</dbReference>
<dbReference type="PANTHER" id="PTHR11727:SF7">
    <property type="entry name" value="DIMETHYLADENOSINE TRANSFERASE-RELATED"/>
    <property type="match status" value="1"/>
</dbReference>
<dbReference type="Pfam" id="PF00398">
    <property type="entry name" value="RrnaAD"/>
    <property type="match status" value="1"/>
</dbReference>
<dbReference type="SMART" id="SM00650">
    <property type="entry name" value="rADc"/>
    <property type="match status" value="1"/>
</dbReference>
<dbReference type="SUPFAM" id="SSF53335">
    <property type="entry name" value="S-adenosyl-L-methionine-dependent methyltransferases"/>
    <property type="match status" value="1"/>
</dbReference>
<dbReference type="PROSITE" id="PS01131">
    <property type="entry name" value="RRNA_A_DIMETH"/>
    <property type="match status" value="1"/>
</dbReference>
<dbReference type="PROSITE" id="PS51689">
    <property type="entry name" value="SAM_RNA_A_N6_MT"/>
    <property type="match status" value="1"/>
</dbReference>
<accession>Q8UGD5</accession>
<reference key="1">
    <citation type="journal article" date="2001" name="Science">
        <title>The genome of the natural genetic engineer Agrobacterium tumefaciens C58.</title>
        <authorList>
            <person name="Wood D.W."/>
            <person name="Setubal J.C."/>
            <person name="Kaul R."/>
            <person name="Monks D.E."/>
            <person name="Kitajima J.P."/>
            <person name="Okura V.K."/>
            <person name="Zhou Y."/>
            <person name="Chen L."/>
            <person name="Wood G.E."/>
            <person name="Almeida N.F. Jr."/>
            <person name="Woo L."/>
            <person name="Chen Y."/>
            <person name="Paulsen I.T."/>
            <person name="Eisen J.A."/>
            <person name="Karp P.D."/>
            <person name="Bovee D. Sr."/>
            <person name="Chapman P."/>
            <person name="Clendenning J."/>
            <person name="Deatherage G."/>
            <person name="Gillet W."/>
            <person name="Grant C."/>
            <person name="Kutyavin T."/>
            <person name="Levy R."/>
            <person name="Li M.-J."/>
            <person name="McClelland E."/>
            <person name="Palmieri A."/>
            <person name="Raymond C."/>
            <person name="Rouse G."/>
            <person name="Saenphimmachak C."/>
            <person name="Wu Z."/>
            <person name="Romero P."/>
            <person name="Gordon D."/>
            <person name="Zhang S."/>
            <person name="Yoo H."/>
            <person name="Tao Y."/>
            <person name="Biddle P."/>
            <person name="Jung M."/>
            <person name="Krespan W."/>
            <person name="Perry M."/>
            <person name="Gordon-Kamm B."/>
            <person name="Liao L."/>
            <person name="Kim S."/>
            <person name="Hendrick C."/>
            <person name="Zhao Z.-Y."/>
            <person name="Dolan M."/>
            <person name="Chumley F."/>
            <person name="Tingey S.V."/>
            <person name="Tomb J.-F."/>
            <person name="Gordon M.P."/>
            <person name="Olson M.V."/>
            <person name="Nester E.W."/>
        </authorList>
    </citation>
    <scope>NUCLEOTIDE SEQUENCE [LARGE SCALE GENOMIC DNA]</scope>
    <source>
        <strain>C58 / ATCC 33970</strain>
    </source>
</reference>
<reference key="2">
    <citation type="journal article" date="2001" name="Science">
        <title>Genome sequence of the plant pathogen and biotechnology agent Agrobacterium tumefaciens C58.</title>
        <authorList>
            <person name="Goodner B."/>
            <person name="Hinkle G."/>
            <person name="Gattung S."/>
            <person name="Miller N."/>
            <person name="Blanchard M."/>
            <person name="Qurollo B."/>
            <person name="Goldman B.S."/>
            <person name="Cao Y."/>
            <person name="Askenazi M."/>
            <person name="Halling C."/>
            <person name="Mullin L."/>
            <person name="Houmiel K."/>
            <person name="Gordon J."/>
            <person name="Vaudin M."/>
            <person name="Iartchouk O."/>
            <person name="Epp A."/>
            <person name="Liu F."/>
            <person name="Wollam C."/>
            <person name="Allinger M."/>
            <person name="Doughty D."/>
            <person name="Scott C."/>
            <person name="Lappas C."/>
            <person name="Markelz B."/>
            <person name="Flanagan C."/>
            <person name="Crowell C."/>
            <person name="Gurson J."/>
            <person name="Lomo C."/>
            <person name="Sear C."/>
            <person name="Strub G."/>
            <person name="Cielo C."/>
            <person name="Slater S."/>
        </authorList>
    </citation>
    <scope>NUCLEOTIDE SEQUENCE [LARGE SCALE GENOMIC DNA]</scope>
    <source>
        <strain>C58 / ATCC 33970</strain>
    </source>
</reference>